<sequence length="349" mass="40101">MGCNSSSLNKLQVPEVRASRSNTPASQKSSDQSYSHIRLLLLGSAESGKTTVLEQVRLLYKQHFTESEYFHRRAFIYHNIFKCIKSLCRAMKMSDIGFADPINMGRSQSIIADEENHYGIFSKELAEKIKCIWADKSMQSLYARRSQFNLNDSAAYFLNNLDKINTLDYKPSDRDLIMAYVPTCGVQNVIFTASNQSFQLFDIGGQKIDRRKWATQYEGIDAIFFCLAISEYDQKMNEDMVTNRLDDALKLLETISEEPMFATTPIYLFLNEIDVFCEKLDVIPLSNYRKDFPGGDQDDALDFMENLAVAALGKRDKSLYRVYRCIAIDTQMMAELLSTVFKDIMKRKR</sequence>
<dbReference type="EMBL" id="AY634291">
    <property type="protein sequence ID" value="AAW02897.1"/>
    <property type="molecule type" value="Genomic_DNA"/>
</dbReference>
<dbReference type="EMBL" id="HE601197">
    <property type="protein sequence ID" value="CAP28439.2"/>
    <property type="molecule type" value="Genomic_DNA"/>
</dbReference>
<dbReference type="SMR" id="Q4VT39"/>
<dbReference type="FunCoup" id="Q4VT39">
    <property type="interactions" value="5"/>
</dbReference>
<dbReference type="STRING" id="6238.Q4VT39"/>
<dbReference type="WormBase" id="CBG08580a">
    <property type="protein sequence ID" value="CBP37615"/>
    <property type="gene ID" value="WBGene00030342"/>
    <property type="gene designation" value="Cbr-gpa-13"/>
</dbReference>
<dbReference type="eggNOG" id="KOG0082">
    <property type="taxonomic scope" value="Eukaryota"/>
</dbReference>
<dbReference type="HOGENOM" id="CLU_014184_6_0_1"/>
<dbReference type="InParanoid" id="Q4VT39"/>
<dbReference type="OMA" id="HRRAFIY"/>
<dbReference type="Proteomes" id="UP000008549">
    <property type="component" value="Unassembled WGS sequence"/>
</dbReference>
<dbReference type="GO" id="GO:0005737">
    <property type="term" value="C:cytoplasm"/>
    <property type="evidence" value="ECO:0000318"/>
    <property type="project" value="GO_Central"/>
</dbReference>
<dbReference type="GO" id="GO:0005834">
    <property type="term" value="C:heterotrimeric G-protein complex"/>
    <property type="evidence" value="ECO:0000318"/>
    <property type="project" value="GO_Central"/>
</dbReference>
<dbReference type="GO" id="GO:0001664">
    <property type="term" value="F:G protein-coupled receptor binding"/>
    <property type="evidence" value="ECO:0000318"/>
    <property type="project" value="GO_Central"/>
</dbReference>
<dbReference type="GO" id="GO:0031683">
    <property type="term" value="F:G-protein beta/gamma-subunit complex binding"/>
    <property type="evidence" value="ECO:0000318"/>
    <property type="project" value="GO_Central"/>
</dbReference>
<dbReference type="GO" id="GO:0005525">
    <property type="term" value="F:GTP binding"/>
    <property type="evidence" value="ECO:0007669"/>
    <property type="project" value="UniProtKB-KW"/>
</dbReference>
<dbReference type="GO" id="GO:0003924">
    <property type="term" value="F:GTPase activity"/>
    <property type="evidence" value="ECO:0000318"/>
    <property type="project" value="GO_Central"/>
</dbReference>
<dbReference type="GO" id="GO:0046872">
    <property type="term" value="F:metal ion binding"/>
    <property type="evidence" value="ECO:0007669"/>
    <property type="project" value="UniProtKB-KW"/>
</dbReference>
<dbReference type="GO" id="GO:0007188">
    <property type="term" value="P:adenylate cyclase-modulating G protein-coupled receptor signaling pathway"/>
    <property type="evidence" value="ECO:0000318"/>
    <property type="project" value="GO_Central"/>
</dbReference>
<dbReference type="CDD" id="cd00066">
    <property type="entry name" value="G-alpha"/>
    <property type="match status" value="1"/>
</dbReference>
<dbReference type="FunFam" id="1.10.400.10:FF:000010">
    <property type="entry name" value="Guanine nucleotide-binding protein alpha-13 subunit"/>
    <property type="match status" value="1"/>
</dbReference>
<dbReference type="FunFam" id="3.40.50.300:FF:000692">
    <property type="entry name" value="Guanine nucleotide-binding protein subunit alpha"/>
    <property type="match status" value="1"/>
</dbReference>
<dbReference type="Gene3D" id="1.10.400.10">
    <property type="entry name" value="GI Alpha 1, domain 2-like"/>
    <property type="match status" value="1"/>
</dbReference>
<dbReference type="Gene3D" id="3.40.50.300">
    <property type="entry name" value="P-loop containing nucleotide triphosphate hydrolases"/>
    <property type="match status" value="1"/>
</dbReference>
<dbReference type="InterPro" id="IPR001019">
    <property type="entry name" value="Gprotein_alpha_su"/>
</dbReference>
<dbReference type="InterPro" id="IPR011025">
    <property type="entry name" value="GproteinA_insert"/>
</dbReference>
<dbReference type="InterPro" id="IPR027417">
    <property type="entry name" value="P-loop_NTPase"/>
</dbReference>
<dbReference type="PANTHER" id="PTHR10218">
    <property type="entry name" value="GTP-BINDING PROTEIN ALPHA SUBUNIT"/>
    <property type="match status" value="1"/>
</dbReference>
<dbReference type="PANTHER" id="PTHR10218:SF210">
    <property type="entry name" value="GUANINE NUCLEOTIDE-BINDING PROTEIN ALPHA-13 SUBUNIT"/>
    <property type="match status" value="1"/>
</dbReference>
<dbReference type="Pfam" id="PF00503">
    <property type="entry name" value="G-alpha"/>
    <property type="match status" value="1"/>
</dbReference>
<dbReference type="PRINTS" id="PR00318">
    <property type="entry name" value="GPROTEINA"/>
</dbReference>
<dbReference type="SMART" id="SM00275">
    <property type="entry name" value="G_alpha"/>
    <property type="match status" value="1"/>
</dbReference>
<dbReference type="SUPFAM" id="SSF52540">
    <property type="entry name" value="P-loop containing nucleoside triphosphate hydrolases"/>
    <property type="match status" value="1"/>
</dbReference>
<dbReference type="SUPFAM" id="SSF47895">
    <property type="entry name" value="Transducin (alpha subunit), insertion domain"/>
    <property type="match status" value="1"/>
</dbReference>
<dbReference type="PROSITE" id="PS51882">
    <property type="entry name" value="G_ALPHA"/>
    <property type="match status" value="1"/>
</dbReference>
<evidence type="ECO:0000250" key="1"/>
<evidence type="ECO:0000255" key="2"/>
<evidence type="ECO:0000255" key="3">
    <source>
        <dbReference type="PROSITE-ProRule" id="PRU01230"/>
    </source>
</evidence>
<evidence type="ECO:0000305" key="4"/>
<evidence type="ECO:0000312" key="5">
    <source>
        <dbReference type="WormBase" id="CBG08580a"/>
    </source>
</evidence>
<organism>
    <name type="scientific">Caenorhabditis briggsae</name>
    <dbReference type="NCBI Taxonomy" id="6238"/>
    <lineage>
        <taxon>Eukaryota</taxon>
        <taxon>Metazoa</taxon>
        <taxon>Ecdysozoa</taxon>
        <taxon>Nematoda</taxon>
        <taxon>Chromadorea</taxon>
        <taxon>Rhabditida</taxon>
        <taxon>Rhabditina</taxon>
        <taxon>Rhabditomorpha</taxon>
        <taxon>Rhabditoidea</taxon>
        <taxon>Rhabditidae</taxon>
        <taxon>Peloderinae</taxon>
        <taxon>Caenorhabditis</taxon>
    </lineage>
</organism>
<name>GPA13_CAEBR</name>
<proteinExistence type="inferred from homology"/>
<protein>
    <recommendedName>
        <fullName>Guanine nucleotide-binding protein alpha-13 subunit</fullName>
    </recommendedName>
</protein>
<gene>
    <name evidence="5" type="primary">gpa-13</name>
    <name evidence="5" type="ORF">CBG08580</name>
</gene>
<keyword id="KW-0342">GTP-binding</keyword>
<keyword id="KW-0449">Lipoprotein</keyword>
<keyword id="KW-0460">Magnesium</keyword>
<keyword id="KW-0479">Metal-binding</keyword>
<keyword id="KW-0519">Myristate</keyword>
<keyword id="KW-0547">Nucleotide-binding</keyword>
<keyword id="KW-0564">Palmitate</keyword>
<keyword id="KW-1185">Reference proteome</keyword>
<keyword id="KW-0807">Transducer</keyword>
<comment type="function">
    <text>Guanine nucleotide-binding proteins (G proteins) are involved as modulators or transducers in various transmembrane signaling systems.</text>
</comment>
<comment type="subunit">
    <text>G proteins are composed of 3 units; alpha, beta and gamma. The alpha chain contains the guanine nucleotide binding site.</text>
</comment>
<comment type="similarity">
    <text evidence="4">Belongs to the G-alpha family.</text>
</comment>
<feature type="initiator methionine" description="Removed" evidence="2">
    <location>
        <position position="1"/>
    </location>
</feature>
<feature type="chain" id="PRO_0000203650" description="Guanine nucleotide-binding protein alpha-13 subunit">
    <location>
        <begin position="2"/>
        <end position="349"/>
    </location>
</feature>
<feature type="domain" description="G-alpha" evidence="3">
    <location>
        <begin position="35"/>
        <end position="349"/>
    </location>
</feature>
<feature type="region of interest" description="G1 motif" evidence="3">
    <location>
        <begin position="38"/>
        <end position="51"/>
    </location>
</feature>
<feature type="region of interest" description="G2 motif" evidence="3">
    <location>
        <begin position="175"/>
        <end position="183"/>
    </location>
</feature>
<feature type="region of interest" description="G3 motif" evidence="3">
    <location>
        <begin position="198"/>
        <end position="207"/>
    </location>
</feature>
<feature type="region of interest" description="G4 motif" evidence="3">
    <location>
        <begin position="267"/>
        <end position="274"/>
    </location>
</feature>
<feature type="region of interest" description="G5 motif" evidence="3">
    <location>
        <begin position="325"/>
        <end position="330"/>
    </location>
</feature>
<feature type="binding site" evidence="1">
    <location>
        <begin position="43"/>
        <end position="50"/>
    </location>
    <ligand>
        <name>GTP</name>
        <dbReference type="ChEBI" id="CHEBI:37565"/>
    </ligand>
</feature>
<feature type="binding site" evidence="1">
    <location>
        <begin position="177"/>
        <end position="183"/>
    </location>
    <ligand>
        <name>GTP</name>
        <dbReference type="ChEBI" id="CHEBI:37565"/>
    </ligand>
</feature>
<feature type="binding site" evidence="1">
    <location>
        <position position="183"/>
    </location>
    <ligand>
        <name>Mg(2+)</name>
        <dbReference type="ChEBI" id="CHEBI:18420"/>
    </ligand>
</feature>
<feature type="binding site" evidence="1">
    <location>
        <begin position="202"/>
        <end position="206"/>
    </location>
    <ligand>
        <name>GTP</name>
        <dbReference type="ChEBI" id="CHEBI:37565"/>
    </ligand>
</feature>
<feature type="binding site" evidence="1">
    <location>
        <begin position="271"/>
        <end position="274"/>
    </location>
    <ligand>
        <name>GTP</name>
        <dbReference type="ChEBI" id="CHEBI:37565"/>
    </ligand>
</feature>
<feature type="binding site" evidence="1">
    <location>
        <position position="327"/>
    </location>
    <ligand>
        <name>GTP</name>
        <dbReference type="ChEBI" id="CHEBI:37565"/>
    </ligand>
</feature>
<feature type="lipid moiety-binding region" description="N-myristoyl glycine" evidence="2">
    <location>
        <position position="2"/>
    </location>
</feature>
<feature type="lipid moiety-binding region" description="S-palmitoyl cysteine" evidence="2">
    <location>
        <position position="3"/>
    </location>
</feature>
<accession>Q4VT39</accession>
<accession>A8X728</accession>
<accession>Q61M96</accession>
<reference key="1">
    <citation type="journal article" date="2005" name="Mol. Genet. Genomics">
        <title>Functional constraint and divergence in the G protein family in Caenorhabditis elegans and Caenorhabditis briggsae.</title>
        <authorList>
            <person name="Jovelin R."/>
            <person name="Phillips P.C."/>
        </authorList>
    </citation>
    <scope>NUCLEOTIDE SEQUENCE [GENOMIC DNA]</scope>
    <source>
        <strain>AF16</strain>
    </source>
</reference>
<reference key="2">
    <citation type="journal article" date="2003" name="PLoS Biol.">
        <title>The genome sequence of Caenorhabditis briggsae: a platform for comparative genomics.</title>
        <authorList>
            <person name="Stein L.D."/>
            <person name="Bao Z."/>
            <person name="Blasiar D."/>
            <person name="Blumenthal T."/>
            <person name="Brent M.R."/>
            <person name="Chen N."/>
            <person name="Chinwalla A."/>
            <person name="Clarke L."/>
            <person name="Clee C."/>
            <person name="Coghlan A."/>
            <person name="Coulson A."/>
            <person name="D'Eustachio P."/>
            <person name="Fitch D.H.A."/>
            <person name="Fulton L.A."/>
            <person name="Fulton R.E."/>
            <person name="Griffiths-Jones S."/>
            <person name="Harris T.W."/>
            <person name="Hillier L.W."/>
            <person name="Kamath R."/>
            <person name="Kuwabara P.E."/>
            <person name="Mardis E.R."/>
            <person name="Marra M.A."/>
            <person name="Miner T.L."/>
            <person name="Minx P."/>
            <person name="Mullikin J.C."/>
            <person name="Plumb R.W."/>
            <person name="Rogers J."/>
            <person name="Schein J.E."/>
            <person name="Sohrmann M."/>
            <person name="Spieth J."/>
            <person name="Stajich J.E."/>
            <person name="Wei C."/>
            <person name="Willey D."/>
            <person name="Wilson R.K."/>
            <person name="Durbin R.M."/>
            <person name="Waterston R.H."/>
        </authorList>
    </citation>
    <scope>NUCLEOTIDE SEQUENCE [LARGE SCALE GENOMIC DNA]</scope>
    <source>
        <strain>AF16</strain>
    </source>
</reference>